<reference key="1">
    <citation type="journal article" date="2003" name="Cytogenet. Genome Res.">
        <title>Cloning and characterization of a novel splicing variant of the ZADH1 gene.</title>
        <authorList>
            <person name="Zhang L."/>
            <person name="Zhang F."/>
            <person name="Huo K."/>
        </authorList>
    </citation>
    <scope>NUCLEOTIDE SEQUENCE [MRNA] (ISOFORM 1)</scope>
    <scope>TISSUE SPECIFICITY</scope>
    <scope>ALTERNATIVE SPLICING</scope>
</reference>
<reference key="2">
    <citation type="submission" date="2003-09" db="EMBL/GenBank/DDBJ databases">
        <title>Cloning and characterization of a putative dehydrogenase.</title>
        <authorList>
            <person name="Zheng H."/>
            <person name="Xie Y."/>
            <person name="Mao Y."/>
        </authorList>
    </citation>
    <scope>NUCLEOTIDE SEQUENCE [MRNA] (ISOFORM 1)</scope>
</reference>
<reference key="3">
    <citation type="journal article" date="2004" name="Nat. Genet.">
        <title>Complete sequencing and characterization of 21,243 full-length human cDNAs.</title>
        <authorList>
            <person name="Ota T."/>
            <person name="Suzuki Y."/>
            <person name="Nishikawa T."/>
            <person name="Otsuki T."/>
            <person name="Sugiyama T."/>
            <person name="Irie R."/>
            <person name="Wakamatsu A."/>
            <person name="Hayashi K."/>
            <person name="Sato H."/>
            <person name="Nagai K."/>
            <person name="Kimura K."/>
            <person name="Makita H."/>
            <person name="Sekine M."/>
            <person name="Obayashi M."/>
            <person name="Nishi T."/>
            <person name="Shibahara T."/>
            <person name="Tanaka T."/>
            <person name="Ishii S."/>
            <person name="Yamamoto J."/>
            <person name="Saito K."/>
            <person name="Kawai Y."/>
            <person name="Isono Y."/>
            <person name="Nakamura Y."/>
            <person name="Nagahari K."/>
            <person name="Murakami K."/>
            <person name="Yasuda T."/>
            <person name="Iwayanagi T."/>
            <person name="Wagatsuma M."/>
            <person name="Shiratori A."/>
            <person name="Sudo H."/>
            <person name="Hosoiri T."/>
            <person name="Kaku Y."/>
            <person name="Kodaira H."/>
            <person name="Kondo H."/>
            <person name="Sugawara M."/>
            <person name="Takahashi M."/>
            <person name="Kanda K."/>
            <person name="Yokoi T."/>
            <person name="Furuya T."/>
            <person name="Kikkawa E."/>
            <person name="Omura Y."/>
            <person name="Abe K."/>
            <person name="Kamihara K."/>
            <person name="Katsuta N."/>
            <person name="Sato K."/>
            <person name="Tanikawa M."/>
            <person name="Yamazaki M."/>
            <person name="Ninomiya K."/>
            <person name="Ishibashi T."/>
            <person name="Yamashita H."/>
            <person name="Murakawa K."/>
            <person name="Fujimori K."/>
            <person name="Tanai H."/>
            <person name="Kimata M."/>
            <person name="Watanabe M."/>
            <person name="Hiraoka S."/>
            <person name="Chiba Y."/>
            <person name="Ishida S."/>
            <person name="Ono Y."/>
            <person name="Takiguchi S."/>
            <person name="Watanabe S."/>
            <person name="Yosida M."/>
            <person name="Hotuta T."/>
            <person name="Kusano J."/>
            <person name="Kanehori K."/>
            <person name="Takahashi-Fujii A."/>
            <person name="Hara H."/>
            <person name="Tanase T.-O."/>
            <person name="Nomura Y."/>
            <person name="Togiya S."/>
            <person name="Komai F."/>
            <person name="Hara R."/>
            <person name="Takeuchi K."/>
            <person name="Arita M."/>
            <person name="Imose N."/>
            <person name="Musashino K."/>
            <person name="Yuuki H."/>
            <person name="Oshima A."/>
            <person name="Sasaki N."/>
            <person name="Aotsuka S."/>
            <person name="Yoshikawa Y."/>
            <person name="Matsunawa H."/>
            <person name="Ichihara T."/>
            <person name="Shiohata N."/>
            <person name="Sano S."/>
            <person name="Moriya S."/>
            <person name="Momiyama H."/>
            <person name="Satoh N."/>
            <person name="Takami S."/>
            <person name="Terashima Y."/>
            <person name="Suzuki O."/>
            <person name="Nakagawa S."/>
            <person name="Senoh A."/>
            <person name="Mizoguchi H."/>
            <person name="Goto Y."/>
            <person name="Shimizu F."/>
            <person name="Wakebe H."/>
            <person name="Hishigaki H."/>
            <person name="Watanabe T."/>
            <person name="Sugiyama A."/>
            <person name="Takemoto M."/>
            <person name="Kawakami B."/>
            <person name="Yamazaki M."/>
            <person name="Watanabe K."/>
            <person name="Kumagai A."/>
            <person name="Itakura S."/>
            <person name="Fukuzumi Y."/>
            <person name="Fujimori Y."/>
            <person name="Komiyama M."/>
            <person name="Tashiro H."/>
            <person name="Tanigami A."/>
            <person name="Fujiwara T."/>
            <person name="Ono T."/>
            <person name="Yamada K."/>
            <person name="Fujii Y."/>
            <person name="Ozaki K."/>
            <person name="Hirao M."/>
            <person name="Ohmori Y."/>
            <person name="Kawabata A."/>
            <person name="Hikiji T."/>
            <person name="Kobatake N."/>
            <person name="Inagaki H."/>
            <person name="Ikema Y."/>
            <person name="Okamoto S."/>
            <person name="Okitani R."/>
            <person name="Kawakami T."/>
            <person name="Noguchi S."/>
            <person name="Itoh T."/>
            <person name="Shigeta K."/>
            <person name="Senba T."/>
            <person name="Matsumura K."/>
            <person name="Nakajima Y."/>
            <person name="Mizuno T."/>
            <person name="Morinaga M."/>
            <person name="Sasaki M."/>
            <person name="Togashi T."/>
            <person name="Oyama M."/>
            <person name="Hata H."/>
            <person name="Watanabe M."/>
            <person name="Komatsu T."/>
            <person name="Mizushima-Sugano J."/>
            <person name="Satoh T."/>
            <person name="Shirai Y."/>
            <person name="Takahashi Y."/>
            <person name="Nakagawa K."/>
            <person name="Okumura K."/>
            <person name="Nagase T."/>
            <person name="Nomura N."/>
            <person name="Kikuchi H."/>
            <person name="Masuho Y."/>
            <person name="Yamashita R."/>
            <person name="Nakai K."/>
            <person name="Yada T."/>
            <person name="Nakamura Y."/>
            <person name="Ohara O."/>
            <person name="Isogai T."/>
            <person name="Sugano S."/>
        </authorList>
    </citation>
    <scope>NUCLEOTIDE SEQUENCE [LARGE SCALE MRNA] (ISOFORM 1)</scope>
</reference>
<reference key="4">
    <citation type="journal article" date="2007" name="BMC Genomics">
        <title>The full-ORF clone resource of the German cDNA consortium.</title>
        <authorList>
            <person name="Bechtel S."/>
            <person name="Rosenfelder H."/>
            <person name="Duda A."/>
            <person name="Schmidt C.P."/>
            <person name="Ernst U."/>
            <person name="Wellenreuther R."/>
            <person name="Mehrle A."/>
            <person name="Schuster C."/>
            <person name="Bahr A."/>
            <person name="Bloecker H."/>
            <person name="Heubner D."/>
            <person name="Hoerlein A."/>
            <person name="Michel G."/>
            <person name="Wedler H."/>
            <person name="Koehrer K."/>
            <person name="Ottenwaelder B."/>
            <person name="Poustka A."/>
            <person name="Wiemann S."/>
            <person name="Schupp I."/>
        </authorList>
    </citation>
    <scope>NUCLEOTIDE SEQUENCE [LARGE SCALE MRNA] (ISOFORM 2)</scope>
    <source>
        <tissue>Fetal kidney</tissue>
    </source>
</reference>
<reference key="5">
    <citation type="submission" date="2005-07" db="EMBL/GenBank/DDBJ databases">
        <authorList>
            <person name="Mural R.J."/>
            <person name="Istrail S."/>
            <person name="Sutton G.G."/>
            <person name="Florea L."/>
            <person name="Halpern A.L."/>
            <person name="Mobarry C.M."/>
            <person name="Lippert R."/>
            <person name="Walenz B."/>
            <person name="Shatkay H."/>
            <person name="Dew I."/>
            <person name="Miller J.R."/>
            <person name="Flanigan M.J."/>
            <person name="Edwards N.J."/>
            <person name="Bolanos R."/>
            <person name="Fasulo D."/>
            <person name="Halldorsson B.V."/>
            <person name="Hannenhalli S."/>
            <person name="Turner R."/>
            <person name="Yooseph S."/>
            <person name="Lu F."/>
            <person name="Nusskern D.R."/>
            <person name="Shue B.C."/>
            <person name="Zheng X.H."/>
            <person name="Zhong F."/>
            <person name="Delcher A.L."/>
            <person name="Huson D.H."/>
            <person name="Kravitz S.A."/>
            <person name="Mouchard L."/>
            <person name="Reinert K."/>
            <person name="Remington K.A."/>
            <person name="Clark A.G."/>
            <person name="Waterman M.S."/>
            <person name="Eichler E.E."/>
            <person name="Adams M.D."/>
            <person name="Hunkapiller M.W."/>
            <person name="Myers E.W."/>
            <person name="Venter J.C."/>
        </authorList>
    </citation>
    <scope>NUCLEOTIDE SEQUENCE [LARGE SCALE GENOMIC DNA]</scope>
</reference>
<reference key="6">
    <citation type="journal article" date="2004" name="Genome Res.">
        <title>The status, quality, and expansion of the NIH full-length cDNA project: the Mammalian Gene Collection (MGC).</title>
        <authorList>
            <consortium name="The MGC Project Team"/>
        </authorList>
    </citation>
    <scope>NUCLEOTIDE SEQUENCE [LARGE SCALE MRNA] (ISOFORM 1)</scope>
    <source>
        <tissue>Brain</tissue>
    </source>
</reference>
<reference key="7">
    <citation type="journal article" date="2011" name="BMC Syst. Biol.">
        <title>Initial characterization of the human central proteome.</title>
        <authorList>
            <person name="Burkard T.R."/>
            <person name="Planyavsky M."/>
            <person name="Kaupe I."/>
            <person name="Breitwieser F.P."/>
            <person name="Buerckstuemmer T."/>
            <person name="Bennett K.L."/>
            <person name="Superti-Furga G."/>
            <person name="Colinge J."/>
        </authorList>
    </citation>
    <scope>IDENTIFICATION BY MASS SPECTROMETRY [LARGE SCALE ANALYSIS]</scope>
</reference>
<reference key="8">
    <citation type="journal article" date="2014" name="J. Proteomics">
        <title>An enzyme assisted RP-RPLC approach for in-depth analysis of human liver phosphoproteome.</title>
        <authorList>
            <person name="Bian Y."/>
            <person name="Song C."/>
            <person name="Cheng K."/>
            <person name="Dong M."/>
            <person name="Wang F."/>
            <person name="Huang J."/>
            <person name="Sun D."/>
            <person name="Wang L."/>
            <person name="Ye M."/>
            <person name="Zou H."/>
        </authorList>
    </citation>
    <scope>IDENTIFICATION BY MASS SPECTROMETRY [LARGE SCALE ANALYSIS]</scope>
    <source>
        <tissue>Liver</tissue>
    </source>
</reference>
<reference key="9">
    <citation type="journal article" date="2008" name="Structure">
        <title>Structural basis for catalytic and inhibitory mechanisms of human prostaglandin reductase PTGR2.</title>
        <authorList>
            <person name="Wu Y.H."/>
            <person name="Ko T.P."/>
            <person name="Guo R.T."/>
            <person name="Hu S.M."/>
            <person name="Chuang L.M."/>
            <person name="Wang A.H."/>
        </authorList>
    </citation>
    <scope>X-RAY CRYSTALLOGRAPHY (1.63 ANGSTROMS) IN COMPLEXES WITH NADPH; 15-KETO-PGE2 AND INDOMETHACIN</scope>
    <scope>FUNCTION</scope>
    <scope>CATALYTIC ACTIVITY</scope>
    <scope>BIOPHYSICOCHEMICAL PROPERTIES</scope>
    <scope>MUTAGENESIS OF TYR-64 AND TYR-259</scope>
</reference>
<reference key="10">
    <citation type="submission" date="2009-01" db="PDB data bank">
        <title>Crystal structure of human zinc-binding alcohol dehydrogenase 1.</title>
        <authorList>
            <consortium name="Structural genomics consortium (SGC)"/>
        </authorList>
    </citation>
    <scope>X-RAY CRYSTALLOGRAPHY (1.85 ANGSTROMS) IN COMPLEXES WITH SUBSTRATE ANALOGS AND NADP</scope>
</reference>
<protein>
    <recommendedName>
        <fullName evidence="6">Prostaglandin reductase 2</fullName>
        <shortName>PRG-2</shortName>
        <ecNumber evidence="4">1.3.1.48</ecNumber>
    </recommendedName>
    <alternativeName>
        <fullName>15-oxoprostaglandin 13-reductase</fullName>
    </alternativeName>
    <alternativeName>
        <fullName>Zinc-binding alcohol dehydrogenase domain-containing protein 1</fullName>
    </alternativeName>
</protein>
<gene>
    <name evidence="8" type="primary">PTGR2</name>
    <name type="synonym">ZADH1</name>
</gene>
<evidence type="ECO:0000250" key="1"/>
<evidence type="ECO:0000250" key="2">
    <source>
        <dbReference type="UniProtKB" id="Q8VDQ1"/>
    </source>
</evidence>
<evidence type="ECO:0000269" key="3">
    <source>
    </source>
</evidence>
<evidence type="ECO:0000269" key="4">
    <source>
    </source>
</evidence>
<evidence type="ECO:0000303" key="5">
    <source>
    </source>
</evidence>
<evidence type="ECO:0000305" key="6"/>
<evidence type="ECO:0000305" key="7">
    <source>
    </source>
</evidence>
<evidence type="ECO:0000312" key="8">
    <source>
        <dbReference type="HGNC" id="HGNC:20149"/>
    </source>
</evidence>
<evidence type="ECO:0007829" key="9">
    <source>
        <dbReference type="PDB" id="2W98"/>
    </source>
</evidence>
<evidence type="ECO:0007829" key="10">
    <source>
        <dbReference type="PDB" id="2ZB4"/>
    </source>
</evidence>
<proteinExistence type="evidence at protein level"/>
<name>PTGR2_HUMAN</name>
<accession>Q8N8N7</accession>
<accession>Q3L8A4</accession>
<accession>Q6MZH8</accession>
<organism>
    <name type="scientific">Homo sapiens</name>
    <name type="common">Human</name>
    <dbReference type="NCBI Taxonomy" id="9606"/>
    <lineage>
        <taxon>Eukaryota</taxon>
        <taxon>Metazoa</taxon>
        <taxon>Chordata</taxon>
        <taxon>Craniata</taxon>
        <taxon>Vertebrata</taxon>
        <taxon>Euteleostomi</taxon>
        <taxon>Mammalia</taxon>
        <taxon>Eutheria</taxon>
        <taxon>Euarchontoglires</taxon>
        <taxon>Primates</taxon>
        <taxon>Haplorrhini</taxon>
        <taxon>Catarrhini</taxon>
        <taxon>Hominidae</taxon>
        <taxon>Homo</taxon>
    </lineage>
</organism>
<sequence length="351" mass="38499">MIVQRVVLNSRPGKNGNPVAENFRMEEVYLPDNINEGQVQVRTLYLSVDPYMRCRMNEDTGTDYITPWQLSQVVDGGGIGIIEESKHTNLTKGDFVTSFYWPWQTKVILDGNSLEKVDPQLVDGHLSYFLGAIGMPGLTSLIGIQEKGHITAGSNKTMVVSGAAGACGSVAGQIGHFLGCSRVVGICGTHEKCILLTSELGFDAAINYKKDNVAEQLRESCPAGVDVYFDNVGGNISDTVISQMNENSHIILCGQISQYNKDVPYPPPLSPAIEAIQKERNITRERFLVLNYKDKFEPGILQLSQWFKEGKLKIKETVINGLENMGAAFQSMMTGGNIGKQIVCISEEISL</sequence>
<comment type="function">
    <text evidence="2 4">Functions as 15-oxo-prostaglandin 13-reductase and acts on 15-keto-PGE1, 15-keto-PGE2, 15-keto-PGE1-alpha and 15-keto-PGE2-alpha with highest activity towards 15-keto-PGE2 (PubMed:19000823). Overexpression represses transcriptional activity of PPARG and inhibits adipocyte differentiation (By similarity).</text>
</comment>
<comment type="catalytic activity">
    <reaction evidence="4">
        <text>13,14-dihydro-15-oxo-prostaglandin E2 + NAD(+) = 15-oxoprostaglandin E2 + NADH + H(+)</text>
        <dbReference type="Rhea" id="RHEA:11916"/>
        <dbReference type="ChEBI" id="CHEBI:15378"/>
        <dbReference type="ChEBI" id="CHEBI:57400"/>
        <dbReference type="ChEBI" id="CHEBI:57402"/>
        <dbReference type="ChEBI" id="CHEBI:57540"/>
        <dbReference type="ChEBI" id="CHEBI:57945"/>
        <dbReference type="EC" id="1.3.1.48"/>
    </reaction>
    <physiologicalReaction direction="right-to-left" evidence="7">
        <dbReference type="Rhea" id="RHEA:11918"/>
    </physiologicalReaction>
</comment>
<comment type="catalytic activity">
    <reaction evidence="4">
        <text>13,14-dihydro-15-oxo-prostaglandin E2 + NADP(+) = 15-oxoprostaglandin E2 + NADPH + H(+)</text>
        <dbReference type="Rhea" id="RHEA:11912"/>
        <dbReference type="ChEBI" id="CHEBI:15378"/>
        <dbReference type="ChEBI" id="CHEBI:57400"/>
        <dbReference type="ChEBI" id="CHEBI:57402"/>
        <dbReference type="ChEBI" id="CHEBI:57783"/>
        <dbReference type="ChEBI" id="CHEBI:58349"/>
        <dbReference type="EC" id="1.3.1.48"/>
    </reaction>
    <physiologicalReaction direction="right-to-left" evidence="7">
        <dbReference type="Rhea" id="RHEA:11914"/>
    </physiologicalReaction>
</comment>
<comment type="catalytic activity">
    <reaction evidence="2">
        <text>13,14-dihydro-15-oxo-PGF2alpha + NADP(+) = 15-oxoprostaglandin F2alpha + NADPH + H(+)</text>
        <dbReference type="Rhea" id="RHEA:50588"/>
        <dbReference type="ChEBI" id="CHEBI:15378"/>
        <dbReference type="ChEBI" id="CHEBI:57783"/>
        <dbReference type="ChEBI" id="CHEBI:58349"/>
        <dbReference type="ChEBI" id="CHEBI:133374"/>
        <dbReference type="ChEBI" id="CHEBI:133409"/>
    </reaction>
    <physiologicalReaction direction="right-to-left" evidence="2">
        <dbReference type="Rhea" id="RHEA:50590"/>
    </physiologicalReaction>
</comment>
<comment type="catalytic activity">
    <reaction evidence="2">
        <text>13,14-dihydro-15-oxo-prostaglandin E1 + NADP(+) = 15-oxoprostaglandin E1 + NADPH + H(+)</text>
        <dbReference type="Rhea" id="RHEA:50584"/>
        <dbReference type="ChEBI" id="CHEBI:15378"/>
        <dbReference type="ChEBI" id="CHEBI:57401"/>
        <dbReference type="ChEBI" id="CHEBI:57783"/>
        <dbReference type="ChEBI" id="CHEBI:58349"/>
        <dbReference type="ChEBI" id="CHEBI:133408"/>
    </reaction>
    <physiologicalReaction direction="right-to-left" evidence="2">
        <dbReference type="Rhea" id="RHEA:50586"/>
    </physiologicalReaction>
</comment>
<comment type="catalytic activity">
    <reaction evidence="2">
        <text>13,14-dihydro-15-oxo-prostaglandin F1alpha + NADP(+) = 15-oxoprostaglandin F1alpha + NADPH + H(+)</text>
        <dbReference type="Rhea" id="RHEA:50592"/>
        <dbReference type="ChEBI" id="CHEBI:15378"/>
        <dbReference type="ChEBI" id="CHEBI:57783"/>
        <dbReference type="ChEBI" id="CHEBI:58349"/>
        <dbReference type="ChEBI" id="CHEBI:79072"/>
        <dbReference type="ChEBI" id="CHEBI:133411"/>
    </reaction>
    <physiologicalReaction direction="right-to-left" evidence="2">
        <dbReference type="Rhea" id="RHEA:50594"/>
    </physiologicalReaction>
</comment>
<comment type="biophysicochemical properties">
    <kinetics>
        <KM evidence="4">11.21 uM for 15-keto-PGE2</KM>
        <KM evidence="4">15.87 uM for NADPH</KM>
        <Vmax evidence="4">159.0 nmol/min/mg enzyme for 15-keto-PGE2</Vmax>
        <Vmax evidence="4">67.0 nmol/min/mg enzyme for NADPH</Vmax>
    </kinetics>
</comment>
<comment type="subunit">
    <text evidence="1">Monomer.</text>
</comment>
<comment type="interaction">
    <interactant intactId="EBI-17614618">
        <id>Q8N8N7</id>
    </interactant>
    <interactant intactId="EBI-724373">
        <id>Q7L4P6</id>
        <label>BEND5</label>
    </interactant>
    <organismsDiffer>false</organismsDiffer>
    <experiments>3</experiments>
</comment>
<comment type="subcellular location">
    <subcellularLocation>
        <location evidence="1">Cytoplasm</location>
    </subcellularLocation>
</comment>
<comment type="alternative products">
    <event type="alternative splicing"/>
    <isoform>
        <id>Q8N8N7-1</id>
        <name>1</name>
        <name>ZADH1b</name>
        <sequence type="displayed"/>
    </isoform>
    <isoform>
        <id>Q8N8N7-2</id>
        <name>2</name>
        <sequence type="described" ref="VSP_013526 VSP_013527"/>
    </isoform>
</comment>
<comment type="tissue specificity">
    <text evidence="3">Widely expressed.</text>
</comment>
<comment type="similarity">
    <text evidence="6">Belongs to the NADP-dependent oxidoreductase L4BD family.</text>
</comment>
<feature type="chain" id="PRO_0000218070" description="Prostaglandin reductase 2">
    <location>
        <begin position="1"/>
        <end position="351"/>
    </location>
</feature>
<feature type="binding site">
    <location>
        <begin position="99"/>
        <end position="100"/>
    </location>
    <ligand>
        <name>substrate</name>
    </ligand>
</feature>
<feature type="binding site">
    <location>
        <begin position="165"/>
        <end position="168"/>
    </location>
    <ligand>
        <name>NADP(+)</name>
        <dbReference type="ChEBI" id="CHEBI:58349"/>
    </ligand>
</feature>
<feature type="binding site">
    <location>
        <position position="192"/>
    </location>
    <ligand>
        <name>NADP(+)</name>
        <dbReference type="ChEBI" id="CHEBI:58349"/>
    </ligand>
</feature>
<feature type="binding site">
    <location>
        <position position="208"/>
    </location>
    <ligand>
        <name>NADP(+)</name>
        <dbReference type="ChEBI" id="CHEBI:58349"/>
    </ligand>
</feature>
<feature type="binding site">
    <location>
        <position position="231"/>
    </location>
    <ligand>
        <name>NADP(+)</name>
        <dbReference type="ChEBI" id="CHEBI:58349"/>
    </ligand>
</feature>
<feature type="binding site">
    <location>
        <begin position="253"/>
        <end position="259"/>
    </location>
    <ligand>
        <name>NADP(+)</name>
        <dbReference type="ChEBI" id="CHEBI:58349"/>
    </ligand>
</feature>
<feature type="binding site">
    <location>
        <begin position="287"/>
        <end position="289"/>
    </location>
    <ligand>
        <name>NADP(+)</name>
        <dbReference type="ChEBI" id="CHEBI:58349"/>
    </ligand>
</feature>
<feature type="binding site">
    <location>
        <begin position="288"/>
        <end position="290"/>
    </location>
    <ligand>
        <name>substrate</name>
    </ligand>
</feature>
<feature type="binding site">
    <location>
        <position position="337"/>
    </location>
    <ligand>
        <name>NADP(+)</name>
        <dbReference type="ChEBI" id="CHEBI:58349"/>
    </ligand>
</feature>
<feature type="splice variant" id="VSP_013526" description="In isoform 2." evidence="5">
    <original>IGHFLGC</original>
    <variation>VNFLRII</variation>
    <location>
        <begin position="174"/>
        <end position="180"/>
    </location>
</feature>
<feature type="splice variant" id="VSP_013527" description="In isoform 2." evidence="5">
    <location>
        <begin position="181"/>
        <end position="351"/>
    </location>
</feature>
<feature type="mutagenesis site" description="Increases affinity for 15-keto-PGE2. Reduces affinity for NADP and Vmax." evidence="4">
    <original>Y</original>
    <variation>F</variation>
    <location>
        <position position="64"/>
    </location>
</feature>
<feature type="mutagenesis site" description="Increases affinity for 15-keto-PGE2. Reduces affinity for NADP and Vmax." evidence="4">
    <original>Y</original>
    <variation>F</variation>
    <location>
        <position position="259"/>
    </location>
</feature>
<feature type="strand" evidence="10">
    <location>
        <begin position="2"/>
        <end position="8"/>
    </location>
</feature>
<feature type="helix" evidence="10">
    <location>
        <begin position="20"/>
        <end position="22"/>
    </location>
</feature>
<feature type="strand" evidence="10">
    <location>
        <begin position="23"/>
        <end position="29"/>
    </location>
</feature>
<feature type="strand" evidence="10">
    <location>
        <begin position="38"/>
        <end position="47"/>
    </location>
</feature>
<feature type="helix" evidence="10">
    <location>
        <begin position="52"/>
        <end position="55"/>
    </location>
</feature>
<feature type="strand" evidence="10">
    <location>
        <begin position="57"/>
        <end position="59"/>
    </location>
</feature>
<feature type="strand" evidence="10">
    <location>
        <begin position="61"/>
        <end position="65"/>
    </location>
</feature>
<feature type="strand" evidence="10">
    <location>
        <begin position="75"/>
        <end position="85"/>
    </location>
</feature>
<feature type="strand" evidence="10">
    <location>
        <begin position="95"/>
        <end position="110"/>
    </location>
</feature>
<feature type="helix" evidence="10">
    <location>
        <begin position="111"/>
        <end position="113"/>
    </location>
</feature>
<feature type="strand" evidence="9">
    <location>
        <begin position="115"/>
        <end position="117"/>
    </location>
</feature>
<feature type="helix" evidence="10">
    <location>
        <begin position="119"/>
        <end position="122"/>
    </location>
</feature>
<feature type="helix" evidence="10">
    <location>
        <begin position="126"/>
        <end position="130"/>
    </location>
</feature>
<feature type="turn" evidence="10">
    <location>
        <begin position="131"/>
        <end position="133"/>
    </location>
</feature>
<feature type="helix" evidence="10">
    <location>
        <begin position="135"/>
        <end position="147"/>
    </location>
</feature>
<feature type="strand" evidence="10">
    <location>
        <begin position="157"/>
        <end position="162"/>
    </location>
</feature>
<feature type="helix" evidence="10">
    <location>
        <begin position="166"/>
        <end position="177"/>
    </location>
</feature>
<feature type="strand" evidence="10">
    <location>
        <begin position="181"/>
        <end position="188"/>
    </location>
</feature>
<feature type="helix" evidence="10">
    <location>
        <begin position="190"/>
        <end position="198"/>
    </location>
</feature>
<feature type="strand" evidence="10">
    <location>
        <begin position="203"/>
        <end position="207"/>
    </location>
</feature>
<feature type="turn" evidence="10">
    <location>
        <begin position="208"/>
        <end position="210"/>
    </location>
</feature>
<feature type="helix" evidence="10">
    <location>
        <begin position="213"/>
        <end position="220"/>
    </location>
</feature>
<feature type="strand" evidence="10">
    <location>
        <begin position="225"/>
        <end position="231"/>
    </location>
</feature>
<feature type="helix" evidence="10">
    <location>
        <begin position="234"/>
        <end position="242"/>
    </location>
</feature>
<feature type="strand" evidence="10">
    <location>
        <begin position="244"/>
        <end position="252"/>
    </location>
</feature>
<feature type="helix" evidence="10">
    <location>
        <begin position="256"/>
        <end position="258"/>
    </location>
</feature>
<feature type="helix" evidence="10">
    <location>
        <begin position="271"/>
        <end position="280"/>
    </location>
</feature>
<feature type="strand" evidence="10">
    <location>
        <begin position="283"/>
        <end position="286"/>
    </location>
</feature>
<feature type="helix" evidence="10">
    <location>
        <begin position="289"/>
        <end position="295"/>
    </location>
</feature>
<feature type="helix" evidence="10">
    <location>
        <begin position="296"/>
        <end position="308"/>
    </location>
</feature>
<feature type="strand" evidence="10">
    <location>
        <begin position="316"/>
        <end position="320"/>
    </location>
</feature>
<feature type="helix" evidence="10">
    <location>
        <begin position="322"/>
        <end position="324"/>
    </location>
</feature>
<feature type="helix" evidence="10">
    <location>
        <begin position="325"/>
        <end position="333"/>
    </location>
</feature>
<feature type="strand" evidence="10">
    <location>
        <begin position="338"/>
        <end position="344"/>
    </location>
</feature>
<keyword id="KW-0002">3D-structure</keyword>
<keyword id="KW-0025">Alternative splicing</keyword>
<keyword id="KW-0963">Cytoplasm</keyword>
<keyword id="KW-0443">Lipid metabolism</keyword>
<keyword id="KW-0521">NADP</keyword>
<keyword id="KW-0560">Oxidoreductase</keyword>
<keyword id="KW-1267">Proteomics identification</keyword>
<keyword id="KW-1185">Reference proteome</keyword>
<dbReference type="EC" id="1.3.1.48" evidence="4"/>
<dbReference type="EMBL" id="AY346133">
    <property type="protein sequence ID" value="AAR05101.1"/>
    <property type="molecule type" value="mRNA"/>
</dbReference>
<dbReference type="EMBL" id="AY424308">
    <property type="protein sequence ID" value="AAR82927.1"/>
    <property type="molecule type" value="mRNA"/>
</dbReference>
<dbReference type="EMBL" id="AK096410">
    <property type="protein sequence ID" value="BAC04781.1"/>
    <property type="molecule type" value="mRNA"/>
</dbReference>
<dbReference type="EMBL" id="BX641118">
    <property type="protein sequence ID" value="CAE46055.1"/>
    <property type="molecule type" value="mRNA"/>
</dbReference>
<dbReference type="EMBL" id="CH471061">
    <property type="protein sequence ID" value="EAW81132.1"/>
    <property type="molecule type" value="Genomic_DNA"/>
</dbReference>
<dbReference type="EMBL" id="BC059364">
    <property type="protein sequence ID" value="AAH59364.1"/>
    <property type="molecule type" value="mRNA"/>
</dbReference>
<dbReference type="CCDS" id="CCDS9820.1">
    <molecule id="Q8N8N7-1"/>
</dbReference>
<dbReference type="RefSeq" id="NP_001139626.1">
    <molecule id="Q8N8N7-1"/>
    <property type="nucleotide sequence ID" value="NM_001146154.2"/>
</dbReference>
<dbReference type="RefSeq" id="NP_001139627.1">
    <molecule id="Q8N8N7-1"/>
    <property type="nucleotide sequence ID" value="NM_001146155.3"/>
</dbReference>
<dbReference type="RefSeq" id="NP_001358254.1">
    <molecule id="Q8N8N7-1"/>
    <property type="nucleotide sequence ID" value="NM_001371325.1"/>
</dbReference>
<dbReference type="RefSeq" id="NP_689657.1">
    <molecule id="Q8N8N7-1"/>
    <property type="nucleotide sequence ID" value="NM_152444.4"/>
</dbReference>
<dbReference type="PDB" id="2VNA">
    <property type="method" value="X-ray"/>
    <property type="resolution" value="2.17 A"/>
    <property type="chains" value="A=1-349"/>
</dbReference>
<dbReference type="PDB" id="2W4Q">
    <property type="method" value="X-ray"/>
    <property type="resolution" value="2.00 A"/>
    <property type="chains" value="A=1-349"/>
</dbReference>
<dbReference type="PDB" id="2W98">
    <property type="method" value="X-ray"/>
    <property type="resolution" value="1.85 A"/>
    <property type="chains" value="A/B=1-349"/>
</dbReference>
<dbReference type="PDB" id="2ZB4">
    <property type="method" value="X-ray"/>
    <property type="resolution" value="1.63 A"/>
    <property type="chains" value="A=1-351"/>
</dbReference>
<dbReference type="PDB" id="2ZB7">
    <property type="method" value="X-ray"/>
    <property type="resolution" value="1.80 A"/>
    <property type="chains" value="A=1-351"/>
</dbReference>
<dbReference type="PDB" id="2ZB8">
    <property type="method" value="X-ray"/>
    <property type="resolution" value="2.00 A"/>
    <property type="chains" value="A=1-351"/>
</dbReference>
<dbReference type="PDBsum" id="2VNA"/>
<dbReference type="PDBsum" id="2W4Q"/>
<dbReference type="PDBsum" id="2W98"/>
<dbReference type="PDBsum" id="2ZB4"/>
<dbReference type="PDBsum" id="2ZB7"/>
<dbReference type="PDBsum" id="2ZB8"/>
<dbReference type="SMR" id="Q8N8N7"/>
<dbReference type="BioGRID" id="126915">
    <property type="interactions" value="28"/>
</dbReference>
<dbReference type="FunCoup" id="Q8N8N7">
    <property type="interactions" value="640"/>
</dbReference>
<dbReference type="IntAct" id="Q8N8N7">
    <property type="interactions" value="5"/>
</dbReference>
<dbReference type="STRING" id="9606.ENSP00000452280"/>
<dbReference type="BindingDB" id="Q8N8N7"/>
<dbReference type="DrugBank" id="DB07177">
    <property type="generic name" value="(5E,13E)-11-HYDROXY-9,15-DIOXOPROSTA-5,13-DIEN-1-OIC ACID"/>
</dbReference>
<dbReference type="DrugBank" id="DB00328">
    <property type="generic name" value="Indomethacin"/>
</dbReference>
<dbReference type="SwissLipids" id="SLP:000001640">
    <molecule id="Q8N8N7-1"/>
</dbReference>
<dbReference type="GlyGen" id="Q8N8N7">
    <property type="glycosylation" value="1 site, 1 O-linked glycan (1 site)"/>
</dbReference>
<dbReference type="iPTMnet" id="Q8N8N7"/>
<dbReference type="PhosphoSitePlus" id="Q8N8N7"/>
<dbReference type="SwissPalm" id="Q8N8N7"/>
<dbReference type="BioMuta" id="PTGR2"/>
<dbReference type="DMDM" id="62901454"/>
<dbReference type="REPRODUCTION-2DPAGE" id="IPI00167515"/>
<dbReference type="jPOST" id="Q8N8N7"/>
<dbReference type="MassIVE" id="Q8N8N7"/>
<dbReference type="PaxDb" id="9606-ENSP00000452280"/>
<dbReference type="PeptideAtlas" id="Q8N8N7"/>
<dbReference type="ProteomicsDB" id="72438">
    <molecule id="Q8N8N7-1"/>
</dbReference>
<dbReference type="ProteomicsDB" id="72439">
    <molecule id="Q8N8N7-2"/>
</dbReference>
<dbReference type="Pumba" id="Q8N8N7"/>
<dbReference type="Antibodypedia" id="30">
    <property type="antibodies" value="232 antibodies from 31 providers"/>
</dbReference>
<dbReference type="DNASU" id="145482"/>
<dbReference type="Ensembl" id="ENST00000267568.8">
    <molecule id="Q8N8N7-1"/>
    <property type="protein sequence ID" value="ENSP00000267568.4"/>
    <property type="gene ID" value="ENSG00000140043.12"/>
</dbReference>
<dbReference type="Ensembl" id="ENST00000555228.5">
    <molecule id="Q8N8N7-1"/>
    <property type="protein sequence ID" value="ENSP00000450975.1"/>
    <property type="gene ID" value="ENSG00000140043.12"/>
</dbReference>
<dbReference type="Ensembl" id="ENST00000555661.6">
    <molecule id="Q8N8N7-1"/>
    <property type="protein sequence ID" value="ENSP00000452280.1"/>
    <property type="gene ID" value="ENSG00000140043.12"/>
</dbReference>
<dbReference type="GeneID" id="145482"/>
<dbReference type="KEGG" id="hsa:145482"/>
<dbReference type="MANE-Select" id="ENST00000555661.6">
    <property type="protein sequence ID" value="ENSP00000452280.1"/>
    <property type="RefSeq nucleotide sequence ID" value="NM_001146154.2"/>
    <property type="RefSeq protein sequence ID" value="NP_001139626.1"/>
</dbReference>
<dbReference type="AGR" id="HGNC:20149"/>
<dbReference type="CTD" id="145482"/>
<dbReference type="DisGeNET" id="145482"/>
<dbReference type="GeneCards" id="PTGR2"/>
<dbReference type="HGNC" id="HGNC:20149">
    <property type="gene designation" value="PTGR2"/>
</dbReference>
<dbReference type="HPA" id="ENSG00000140043">
    <property type="expression patterns" value="Low tissue specificity"/>
</dbReference>
<dbReference type="MIM" id="608642">
    <property type="type" value="gene"/>
</dbReference>
<dbReference type="neXtProt" id="NX_Q8N8N7"/>
<dbReference type="OpenTargets" id="ENSG00000140043"/>
<dbReference type="PharmGKB" id="PA162400323"/>
<dbReference type="VEuPathDB" id="HostDB:ENSG00000140043"/>
<dbReference type="eggNOG" id="KOG1196">
    <property type="taxonomic scope" value="Eukaryota"/>
</dbReference>
<dbReference type="GeneTree" id="ENSGT00940000156793"/>
<dbReference type="HOGENOM" id="CLU_026673_29_2_1"/>
<dbReference type="InParanoid" id="Q8N8N7"/>
<dbReference type="OMA" id="EEKCRYA"/>
<dbReference type="OrthoDB" id="809632at2759"/>
<dbReference type="PAN-GO" id="Q8N8N7">
    <property type="GO annotations" value="2 GO annotations based on evolutionary models"/>
</dbReference>
<dbReference type="PhylomeDB" id="Q8N8N7"/>
<dbReference type="TreeFam" id="TF324201"/>
<dbReference type="BioCyc" id="MetaCyc:HS06681-MONOMER"/>
<dbReference type="PathwayCommons" id="Q8N8N7"/>
<dbReference type="Reactome" id="R-HSA-2162123">
    <property type="pathway name" value="Synthesis of Prostaglandins (PG) and Thromboxanes (TX)"/>
</dbReference>
<dbReference type="SABIO-RK" id="Q8N8N7"/>
<dbReference type="SignaLink" id="Q8N8N7"/>
<dbReference type="BioGRID-ORCS" id="145482">
    <property type="hits" value="14 hits in 1158 CRISPR screens"/>
</dbReference>
<dbReference type="ChiTaRS" id="PTGR2">
    <property type="organism name" value="human"/>
</dbReference>
<dbReference type="EvolutionaryTrace" id="Q8N8N7"/>
<dbReference type="GenomeRNAi" id="145482"/>
<dbReference type="Pharos" id="Q8N8N7">
    <property type="development level" value="Tbio"/>
</dbReference>
<dbReference type="PRO" id="PR:Q8N8N7"/>
<dbReference type="Proteomes" id="UP000005640">
    <property type="component" value="Chromosome 14"/>
</dbReference>
<dbReference type="RNAct" id="Q8N8N7">
    <property type="molecule type" value="protein"/>
</dbReference>
<dbReference type="Bgee" id="ENSG00000140043">
    <property type="expression patterns" value="Expressed in hindlimb stylopod muscle and 160 other cell types or tissues"/>
</dbReference>
<dbReference type="ExpressionAtlas" id="Q8N8N7">
    <property type="expression patterns" value="baseline and differential"/>
</dbReference>
<dbReference type="GO" id="GO:0005737">
    <property type="term" value="C:cytoplasm"/>
    <property type="evidence" value="ECO:0007669"/>
    <property type="project" value="UniProtKB-SubCell"/>
</dbReference>
<dbReference type="GO" id="GO:0047522">
    <property type="term" value="F:15-oxoprostaglandin 13-oxidase [NAD(P)+] activity"/>
    <property type="evidence" value="ECO:0000314"/>
    <property type="project" value="UniProtKB"/>
</dbReference>
<dbReference type="GO" id="GO:0006693">
    <property type="term" value="P:prostaglandin metabolic process"/>
    <property type="evidence" value="ECO:0000314"/>
    <property type="project" value="UniProtKB"/>
</dbReference>
<dbReference type="CDD" id="cd08293">
    <property type="entry name" value="PTGR2"/>
    <property type="match status" value="1"/>
</dbReference>
<dbReference type="FunFam" id="3.40.50.720:FF:000121">
    <property type="entry name" value="Prostaglandin reductase 2"/>
    <property type="match status" value="1"/>
</dbReference>
<dbReference type="FunFam" id="3.90.180.10:FF:000019">
    <property type="entry name" value="Prostaglandin reductase 2"/>
    <property type="match status" value="1"/>
</dbReference>
<dbReference type="Gene3D" id="3.90.180.10">
    <property type="entry name" value="Medium-chain alcohol dehydrogenases, catalytic domain"/>
    <property type="match status" value="1"/>
</dbReference>
<dbReference type="Gene3D" id="3.40.50.720">
    <property type="entry name" value="NAD(P)-binding Rossmann-like Domain"/>
    <property type="match status" value="1"/>
</dbReference>
<dbReference type="InterPro" id="IPR013149">
    <property type="entry name" value="ADH-like_C"/>
</dbReference>
<dbReference type="InterPro" id="IPR041694">
    <property type="entry name" value="ADH_N_2"/>
</dbReference>
<dbReference type="InterPro" id="IPR011032">
    <property type="entry name" value="GroES-like_sf"/>
</dbReference>
<dbReference type="InterPro" id="IPR045010">
    <property type="entry name" value="MDR_fam"/>
</dbReference>
<dbReference type="InterPro" id="IPR036291">
    <property type="entry name" value="NAD(P)-bd_dom_sf"/>
</dbReference>
<dbReference type="InterPro" id="IPR037399">
    <property type="entry name" value="PTGR2"/>
</dbReference>
<dbReference type="PANTHER" id="PTHR43205">
    <property type="entry name" value="PROSTAGLANDIN REDUCTASE"/>
    <property type="match status" value="1"/>
</dbReference>
<dbReference type="PANTHER" id="PTHR43205:SF5">
    <property type="entry name" value="PROSTAGLANDIN REDUCTASE 2"/>
    <property type="match status" value="1"/>
</dbReference>
<dbReference type="Pfam" id="PF16884">
    <property type="entry name" value="ADH_N_2"/>
    <property type="match status" value="1"/>
</dbReference>
<dbReference type="Pfam" id="PF00107">
    <property type="entry name" value="ADH_zinc_N"/>
    <property type="match status" value="1"/>
</dbReference>
<dbReference type="SUPFAM" id="SSF50129">
    <property type="entry name" value="GroES-like"/>
    <property type="match status" value="2"/>
</dbReference>
<dbReference type="SUPFAM" id="SSF51735">
    <property type="entry name" value="NAD(P)-binding Rossmann-fold domains"/>
    <property type="match status" value="1"/>
</dbReference>